<proteinExistence type="inferred from homology"/>
<organism>
    <name type="scientific">Shewanella baltica (strain OS155 / ATCC BAA-1091)</name>
    <dbReference type="NCBI Taxonomy" id="325240"/>
    <lineage>
        <taxon>Bacteria</taxon>
        <taxon>Pseudomonadati</taxon>
        <taxon>Pseudomonadota</taxon>
        <taxon>Gammaproteobacteria</taxon>
        <taxon>Alteromonadales</taxon>
        <taxon>Shewanellaceae</taxon>
        <taxon>Shewanella</taxon>
    </lineage>
</organism>
<protein>
    <recommendedName>
        <fullName evidence="1">Protein SlyX homolog</fullName>
    </recommendedName>
</protein>
<evidence type="ECO:0000255" key="1">
    <source>
        <dbReference type="HAMAP-Rule" id="MF_00715"/>
    </source>
</evidence>
<name>SLYX_SHEB5</name>
<accession>A3D0Z9</accession>
<comment type="similarity">
    <text evidence="1">Belongs to the SlyX family.</text>
</comment>
<dbReference type="EMBL" id="CP000563">
    <property type="protein sequence ID" value="ABN60412.1"/>
    <property type="molecule type" value="Genomic_DNA"/>
</dbReference>
<dbReference type="RefSeq" id="WP_006080410.1">
    <property type="nucleotide sequence ID" value="NC_009052.1"/>
</dbReference>
<dbReference type="SMR" id="A3D0Z9"/>
<dbReference type="STRING" id="325240.Sbal_0887"/>
<dbReference type="KEGG" id="sbl:Sbal_0887"/>
<dbReference type="HOGENOM" id="CLU_180796_4_0_6"/>
<dbReference type="OrthoDB" id="5771733at2"/>
<dbReference type="Proteomes" id="UP000001557">
    <property type="component" value="Chromosome"/>
</dbReference>
<dbReference type="Gene3D" id="1.20.5.300">
    <property type="match status" value="1"/>
</dbReference>
<dbReference type="HAMAP" id="MF_00715">
    <property type="entry name" value="SlyX"/>
    <property type="match status" value="1"/>
</dbReference>
<dbReference type="InterPro" id="IPR007236">
    <property type="entry name" value="SlyX"/>
</dbReference>
<dbReference type="PANTHER" id="PTHR36508">
    <property type="entry name" value="PROTEIN SLYX"/>
    <property type="match status" value="1"/>
</dbReference>
<dbReference type="PANTHER" id="PTHR36508:SF1">
    <property type="entry name" value="PROTEIN SLYX"/>
    <property type="match status" value="1"/>
</dbReference>
<dbReference type="Pfam" id="PF04102">
    <property type="entry name" value="SlyX"/>
    <property type="match status" value="1"/>
</dbReference>
<reference key="1">
    <citation type="submission" date="2007-02" db="EMBL/GenBank/DDBJ databases">
        <title>Complete sequence of chromosome of Shewanella baltica OS155.</title>
        <authorList>
            <consortium name="US DOE Joint Genome Institute"/>
            <person name="Copeland A."/>
            <person name="Lucas S."/>
            <person name="Lapidus A."/>
            <person name="Barry K."/>
            <person name="Detter J.C."/>
            <person name="Glavina del Rio T."/>
            <person name="Hammon N."/>
            <person name="Israni S."/>
            <person name="Dalin E."/>
            <person name="Tice H."/>
            <person name="Pitluck S."/>
            <person name="Sims D.R."/>
            <person name="Brettin T."/>
            <person name="Bruce D."/>
            <person name="Han C."/>
            <person name="Tapia R."/>
            <person name="Brainard J."/>
            <person name="Schmutz J."/>
            <person name="Larimer F."/>
            <person name="Land M."/>
            <person name="Hauser L."/>
            <person name="Kyrpides N."/>
            <person name="Mikhailova N."/>
            <person name="Brettar I."/>
            <person name="Klappenbach J."/>
            <person name="Konstantinidis K."/>
            <person name="Rodrigues J."/>
            <person name="Tiedje J."/>
            <person name="Richardson P."/>
        </authorList>
    </citation>
    <scope>NUCLEOTIDE SEQUENCE [LARGE SCALE GENOMIC DNA]</scope>
    <source>
        <strain>OS155 / ATCC BAA-1091</strain>
    </source>
</reference>
<sequence length="70" mass="8062">MQGVQAQIEDLETKLAFQELTVEELNQEVIKLNRLVAHQQHQIHMLIGKLQDMEPSNMATQAEETPPPHY</sequence>
<keyword id="KW-1185">Reference proteome</keyword>
<gene>
    <name evidence="1" type="primary">slyX</name>
    <name type="ordered locus">Sbal_0887</name>
</gene>
<feature type="chain" id="PRO_1000045732" description="Protein SlyX homolog">
    <location>
        <begin position="1"/>
        <end position="70"/>
    </location>
</feature>